<comment type="function">
    <text evidence="2">With S4 and S5 plays an important role in translational accuracy.</text>
</comment>
<comment type="function">
    <text evidence="2">Interacts with and stabilizes bases of the 16S rRNA that are involved in tRNA selection in the A site and with the mRNA backbone. Located at the interface of the 30S and 50S subunits, it traverses the body of the 30S subunit contacting proteins on the other side and probably holding the rRNA structure together. The combined cluster of proteins S8, S12 and S17 appears to hold together the shoulder and platform of the 30S subunit.</text>
</comment>
<comment type="subunit">
    <text evidence="2">Part of the 30S ribosomal subunit. Contacts proteins S8 and S17. May interact with IF1 in the 30S initiation complex.</text>
</comment>
<comment type="similarity">
    <text evidence="2">Belongs to the universal ribosomal protein uS12 family.</text>
</comment>
<gene>
    <name evidence="2" type="primary">rpsL</name>
    <name type="ordered locus">GFO_2843</name>
</gene>
<proteinExistence type="inferred from homology"/>
<sequence length="124" mass="13746">MPTISQLVRKGRAKITKKSKSAALDSCPQRRGVCTRVYTTTPKKPNSAMRKVARVRLTNGKEVNAYIPGEGHNLQEHSIVLVRGGRVKDLPGVRYHIVRGALDTAGVEGRTQRRSKYGAKRPKK</sequence>
<name>RS12_CHRFK</name>
<dbReference type="EMBL" id="CU207366">
    <property type="protein sequence ID" value="CAL67797.1"/>
    <property type="molecule type" value="Genomic_DNA"/>
</dbReference>
<dbReference type="RefSeq" id="WP_010230128.1">
    <property type="nucleotide sequence ID" value="NC_008571.1"/>
</dbReference>
<dbReference type="SMR" id="A0M5A2"/>
<dbReference type="STRING" id="411154.GFO_2843"/>
<dbReference type="GeneID" id="94370234"/>
<dbReference type="KEGG" id="gfo:GFO_2843"/>
<dbReference type="eggNOG" id="COG0048">
    <property type="taxonomic scope" value="Bacteria"/>
</dbReference>
<dbReference type="HOGENOM" id="CLU_104295_1_2_10"/>
<dbReference type="OrthoDB" id="9802366at2"/>
<dbReference type="Proteomes" id="UP000000755">
    <property type="component" value="Chromosome"/>
</dbReference>
<dbReference type="GO" id="GO:0015935">
    <property type="term" value="C:small ribosomal subunit"/>
    <property type="evidence" value="ECO:0007669"/>
    <property type="project" value="InterPro"/>
</dbReference>
<dbReference type="GO" id="GO:0019843">
    <property type="term" value="F:rRNA binding"/>
    <property type="evidence" value="ECO:0007669"/>
    <property type="project" value="UniProtKB-UniRule"/>
</dbReference>
<dbReference type="GO" id="GO:0003735">
    <property type="term" value="F:structural constituent of ribosome"/>
    <property type="evidence" value="ECO:0007669"/>
    <property type="project" value="InterPro"/>
</dbReference>
<dbReference type="GO" id="GO:0000049">
    <property type="term" value="F:tRNA binding"/>
    <property type="evidence" value="ECO:0007669"/>
    <property type="project" value="UniProtKB-UniRule"/>
</dbReference>
<dbReference type="GO" id="GO:0006412">
    <property type="term" value="P:translation"/>
    <property type="evidence" value="ECO:0007669"/>
    <property type="project" value="UniProtKB-UniRule"/>
</dbReference>
<dbReference type="CDD" id="cd03368">
    <property type="entry name" value="Ribosomal_S12"/>
    <property type="match status" value="1"/>
</dbReference>
<dbReference type="FunFam" id="2.40.50.140:FF:000001">
    <property type="entry name" value="30S ribosomal protein S12"/>
    <property type="match status" value="1"/>
</dbReference>
<dbReference type="Gene3D" id="2.40.50.140">
    <property type="entry name" value="Nucleic acid-binding proteins"/>
    <property type="match status" value="1"/>
</dbReference>
<dbReference type="HAMAP" id="MF_00403_B">
    <property type="entry name" value="Ribosomal_uS12_B"/>
    <property type="match status" value="1"/>
</dbReference>
<dbReference type="InterPro" id="IPR012340">
    <property type="entry name" value="NA-bd_OB-fold"/>
</dbReference>
<dbReference type="InterPro" id="IPR006032">
    <property type="entry name" value="Ribosomal_uS12"/>
</dbReference>
<dbReference type="InterPro" id="IPR005679">
    <property type="entry name" value="Ribosomal_uS12_bac"/>
</dbReference>
<dbReference type="NCBIfam" id="TIGR00981">
    <property type="entry name" value="rpsL_bact"/>
    <property type="match status" value="1"/>
</dbReference>
<dbReference type="PANTHER" id="PTHR11652">
    <property type="entry name" value="30S RIBOSOMAL PROTEIN S12 FAMILY MEMBER"/>
    <property type="match status" value="1"/>
</dbReference>
<dbReference type="Pfam" id="PF00164">
    <property type="entry name" value="Ribosom_S12_S23"/>
    <property type="match status" value="1"/>
</dbReference>
<dbReference type="PIRSF" id="PIRSF002133">
    <property type="entry name" value="Ribosomal_S12/S23"/>
    <property type="match status" value="1"/>
</dbReference>
<dbReference type="PRINTS" id="PR01034">
    <property type="entry name" value="RIBOSOMALS12"/>
</dbReference>
<dbReference type="SUPFAM" id="SSF50249">
    <property type="entry name" value="Nucleic acid-binding proteins"/>
    <property type="match status" value="1"/>
</dbReference>
<dbReference type="PROSITE" id="PS00055">
    <property type="entry name" value="RIBOSOMAL_S12"/>
    <property type="match status" value="1"/>
</dbReference>
<keyword id="KW-0488">Methylation</keyword>
<keyword id="KW-0687">Ribonucleoprotein</keyword>
<keyword id="KW-0689">Ribosomal protein</keyword>
<keyword id="KW-0694">RNA-binding</keyword>
<keyword id="KW-0699">rRNA-binding</keyword>
<keyword id="KW-0820">tRNA-binding</keyword>
<reference key="1">
    <citation type="journal article" date="2006" name="Environ. Microbiol.">
        <title>Whole genome analysis of the marine Bacteroidetes'Gramella forsetii' reveals adaptations to degradation of polymeric organic matter.</title>
        <authorList>
            <person name="Bauer M."/>
            <person name="Kube M."/>
            <person name="Teeling H."/>
            <person name="Richter M."/>
            <person name="Lombardot T."/>
            <person name="Allers E."/>
            <person name="Wuerdemann C.A."/>
            <person name="Quast C."/>
            <person name="Kuhl H."/>
            <person name="Knaust F."/>
            <person name="Woebken D."/>
            <person name="Bischof K."/>
            <person name="Mussmann M."/>
            <person name="Choudhuri J.V."/>
            <person name="Meyer F."/>
            <person name="Reinhardt R."/>
            <person name="Amann R.I."/>
            <person name="Gloeckner F.O."/>
        </authorList>
    </citation>
    <scope>NUCLEOTIDE SEQUENCE [LARGE SCALE GENOMIC DNA]</scope>
    <source>
        <strain>DSM 17595 / CGMCC 1.15422 / KT0803</strain>
    </source>
</reference>
<feature type="chain" id="PRO_0000295982" description="Small ribosomal subunit protein uS12">
    <location>
        <begin position="1"/>
        <end position="124"/>
    </location>
</feature>
<feature type="region of interest" description="Disordered" evidence="3">
    <location>
        <begin position="1"/>
        <end position="24"/>
    </location>
</feature>
<feature type="region of interest" description="Disordered" evidence="3">
    <location>
        <begin position="105"/>
        <end position="124"/>
    </location>
</feature>
<feature type="compositionally biased region" description="Basic residues" evidence="3">
    <location>
        <begin position="9"/>
        <end position="20"/>
    </location>
</feature>
<feature type="compositionally biased region" description="Basic residues" evidence="3">
    <location>
        <begin position="112"/>
        <end position="124"/>
    </location>
</feature>
<feature type="modified residue" description="3-methylthioaspartic acid" evidence="1">
    <location>
        <position position="89"/>
    </location>
</feature>
<organism>
    <name type="scientific">Christiangramia forsetii (strain DSM 17595 / CGMCC 1.15422 / KT0803)</name>
    <name type="common">Gramella forsetii</name>
    <dbReference type="NCBI Taxonomy" id="411154"/>
    <lineage>
        <taxon>Bacteria</taxon>
        <taxon>Pseudomonadati</taxon>
        <taxon>Bacteroidota</taxon>
        <taxon>Flavobacteriia</taxon>
        <taxon>Flavobacteriales</taxon>
        <taxon>Flavobacteriaceae</taxon>
        <taxon>Christiangramia</taxon>
    </lineage>
</organism>
<accession>A0M5A2</accession>
<evidence type="ECO:0000250" key="1"/>
<evidence type="ECO:0000255" key="2">
    <source>
        <dbReference type="HAMAP-Rule" id="MF_00403"/>
    </source>
</evidence>
<evidence type="ECO:0000256" key="3">
    <source>
        <dbReference type="SAM" id="MobiDB-lite"/>
    </source>
</evidence>
<evidence type="ECO:0000305" key="4"/>
<protein>
    <recommendedName>
        <fullName evidence="2">Small ribosomal subunit protein uS12</fullName>
    </recommendedName>
    <alternativeName>
        <fullName evidence="4">30S ribosomal protein S12</fullName>
    </alternativeName>
</protein>